<feature type="chain" id="PRO_0000229185" description="tRNA (guanine-N(7)-)-methyltransferase">
    <location>
        <begin position="1"/>
        <end position="241"/>
    </location>
</feature>
<feature type="region of interest" description="Disordered" evidence="3">
    <location>
        <begin position="1"/>
        <end position="20"/>
    </location>
</feature>
<feature type="active site" evidence="1">
    <location>
        <position position="146"/>
    </location>
</feature>
<feature type="binding site" evidence="2">
    <location>
        <position position="71"/>
    </location>
    <ligand>
        <name>S-adenosyl-L-methionine</name>
        <dbReference type="ChEBI" id="CHEBI:59789"/>
    </ligand>
</feature>
<feature type="binding site" evidence="2">
    <location>
        <position position="96"/>
    </location>
    <ligand>
        <name>S-adenosyl-L-methionine</name>
        <dbReference type="ChEBI" id="CHEBI:59789"/>
    </ligand>
</feature>
<feature type="binding site" evidence="2">
    <location>
        <position position="123"/>
    </location>
    <ligand>
        <name>S-adenosyl-L-methionine</name>
        <dbReference type="ChEBI" id="CHEBI:59789"/>
    </ligand>
</feature>
<feature type="binding site" evidence="2">
    <location>
        <position position="146"/>
    </location>
    <ligand>
        <name>S-adenosyl-L-methionine</name>
        <dbReference type="ChEBI" id="CHEBI:59789"/>
    </ligand>
</feature>
<feature type="binding site" evidence="2">
    <location>
        <position position="150"/>
    </location>
    <ligand>
        <name>substrate</name>
    </ligand>
</feature>
<feature type="binding site" evidence="2">
    <location>
        <position position="182"/>
    </location>
    <ligand>
        <name>substrate</name>
    </ligand>
</feature>
<feature type="binding site" evidence="2">
    <location>
        <begin position="219"/>
        <end position="222"/>
    </location>
    <ligand>
        <name>substrate</name>
    </ligand>
</feature>
<comment type="function">
    <text evidence="2">Catalyzes the formation of N(7)-methylguanine at position 46 (m7G46) in tRNA.</text>
</comment>
<comment type="catalytic activity">
    <reaction evidence="2">
        <text>guanosine(46) in tRNA + S-adenosyl-L-methionine = N(7)-methylguanosine(46) in tRNA + S-adenosyl-L-homocysteine</text>
        <dbReference type="Rhea" id="RHEA:42708"/>
        <dbReference type="Rhea" id="RHEA-COMP:10188"/>
        <dbReference type="Rhea" id="RHEA-COMP:10189"/>
        <dbReference type="ChEBI" id="CHEBI:57856"/>
        <dbReference type="ChEBI" id="CHEBI:59789"/>
        <dbReference type="ChEBI" id="CHEBI:74269"/>
        <dbReference type="ChEBI" id="CHEBI:74480"/>
        <dbReference type="EC" id="2.1.1.33"/>
    </reaction>
</comment>
<comment type="pathway">
    <text evidence="2">tRNA modification; N(7)-methylguanine-tRNA biosynthesis.</text>
</comment>
<comment type="similarity">
    <text evidence="2">Belongs to the class I-like SAM-binding methyltransferase superfamily. TrmB family.</text>
</comment>
<gene>
    <name evidence="2" type="primary">trmB</name>
    <name type="ordered locus">PFL_5849</name>
</gene>
<name>TRMB_PSEF5</name>
<keyword id="KW-0489">Methyltransferase</keyword>
<keyword id="KW-0949">S-adenosyl-L-methionine</keyword>
<keyword id="KW-0808">Transferase</keyword>
<keyword id="KW-0819">tRNA processing</keyword>
<protein>
    <recommendedName>
        <fullName evidence="2">tRNA (guanine-N(7)-)-methyltransferase</fullName>
        <ecNumber evidence="2">2.1.1.33</ecNumber>
    </recommendedName>
    <alternativeName>
        <fullName evidence="2">tRNA (guanine(46)-N(7))-methyltransferase</fullName>
    </alternativeName>
    <alternativeName>
        <fullName evidence="2">tRNA(m7G46)-methyltransferase</fullName>
    </alternativeName>
</protein>
<sequence length="241" mass="27118">MTESNDTPIQPEAGDERQHRRIKSFVMRAGRMTEGQQRGLDQGAPLYVLPLADAPVDYDQVFGRSAPRSLEIGFGMGHSLLEMAAAAPEQDFIGVEVHRPGVGALLNGVLTQGLTNLRVYDCDAIEVLNRCIADNSLDRLMLFFPDPWHKSRHHKRRIVQASFAELVRSKLKVGGILHMATDWEPYAEYMLEVMNVAPGYRNLAEDGKCVPRPAERPITKFERRGERLGHGVWDLKFEKLA</sequence>
<evidence type="ECO:0000250" key="1"/>
<evidence type="ECO:0000255" key="2">
    <source>
        <dbReference type="HAMAP-Rule" id="MF_01057"/>
    </source>
</evidence>
<evidence type="ECO:0000256" key="3">
    <source>
        <dbReference type="SAM" id="MobiDB-lite"/>
    </source>
</evidence>
<reference key="1">
    <citation type="journal article" date="2005" name="Nat. Biotechnol.">
        <title>Complete genome sequence of the plant commensal Pseudomonas fluorescens Pf-5.</title>
        <authorList>
            <person name="Paulsen I.T."/>
            <person name="Press C.M."/>
            <person name="Ravel J."/>
            <person name="Kobayashi D.Y."/>
            <person name="Myers G.S.A."/>
            <person name="Mavrodi D.V."/>
            <person name="DeBoy R.T."/>
            <person name="Seshadri R."/>
            <person name="Ren Q."/>
            <person name="Madupu R."/>
            <person name="Dodson R.J."/>
            <person name="Durkin A.S."/>
            <person name="Brinkac L.M."/>
            <person name="Daugherty S.C."/>
            <person name="Sullivan S.A."/>
            <person name="Rosovitz M.J."/>
            <person name="Gwinn M.L."/>
            <person name="Zhou L."/>
            <person name="Schneider D.J."/>
            <person name="Cartinhour S.W."/>
            <person name="Nelson W.C."/>
            <person name="Weidman J."/>
            <person name="Watkins K."/>
            <person name="Tran K."/>
            <person name="Khouri H."/>
            <person name="Pierson E.A."/>
            <person name="Pierson L.S. III"/>
            <person name="Thomashow L.S."/>
            <person name="Loper J.E."/>
        </authorList>
    </citation>
    <scope>NUCLEOTIDE SEQUENCE [LARGE SCALE GENOMIC DNA]</scope>
    <source>
        <strain>ATCC BAA-477 / NRRL B-23932 / Pf-5</strain>
    </source>
</reference>
<dbReference type="EC" id="2.1.1.33" evidence="2"/>
<dbReference type="EMBL" id="CP000076">
    <property type="protein sequence ID" value="AAY95039.1"/>
    <property type="molecule type" value="Genomic_DNA"/>
</dbReference>
<dbReference type="RefSeq" id="WP_011064023.1">
    <property type="nucleotide sequence ID" value="NC_004129.6"/>
</dbReference>
<dbReference type="SMR" id="Q4K4C6"/>
<dbReference type="STRING" id="220664.PFL_5849"/>
<dbReference type="GeneID" id="57478804"/>
<dbReference type="KEGG" id="pfl:PFL_5849"/>
<dbReference type="PATRIC" id="fig|220664.5.peg.5963"/>
<dbReference type="eggNOG" id="COG0220">
    <property type="taxonomic scope" value="Bacteria"/>
</dbReference>
<dbReference type="HOGENOM" id="CLU_050910_0_1_6"/>
<dbReference type="UniPathway" id="UPA00989"/>
<dbReference type="Proteomes" id="UP000008540">
    <property type="component" value="Chromosome"/>
</dbReference>
<dbReference type="GO" id="GO:0043527">
    <property type="term" value="C:tRNA methyltransferase complex"/>
    <property type="evidence" value="ECO:0007669"/>
    <property type="project" value="TreeGrafter"/>
</dbReference>
<dbReference type="GO" id="GO:0008176">
    <property type="term" value="F:tRNA (guanine(46)-N7)-methyltransferase activity"/>
    <property type="evidence" value="ECO:0007669"/>
    <property type="project" value="UniProtKB-UniRule"/>
</dbReference>
<dbReference type="CDD" id="cd02440">
    <property type="entry name" value="AdoMet_MTases"/>
    <property type="match status" value="1"/>
</dbReference>
<dbReference type="FunFam" id="3.40.50.150:FF:000035">
    <property type="entry name" value="tRNA (guanine-N(7)-)-methyltransferase"/>
    <property type="match status" value="1"/>
</dbReference>
<dbReference type="Gene3D" id="3.40.50.150">
    <property type="entry name" value="Vaccinia Virus protein VP39"/>
    <property type="match status" value="1"/>
</dbReference>
<dbReference type="HAMAP" id="MF_01057">
    <property type="entry name" value="tRNA_methyltr_TrmB"/>
    <property type="match status" value="1"/>
</dbReference>
<dbReference type="InterPro" id="IPR029063">
    <property type="entry name" value="SAM-dependent_MTases_sf"/>
</dbReference>
<dbReference type="InterPro" id="IPR003358">
    <property type="entry name" value="tRNA_(Gua-N-7)_MeTrfase_Trmb"/>
</dbReference>
<dbReference type="InterPro" id="IPR055361">
    <property type="entry name" value="tRNA_methyltr_TrmB_bact"/>
</dbReference>
<dbReference type="NCBIfam" id="TIGR00091">
    <property type="entry name" value="tRNA (guanosine(46)-N7)-methyltransferase TrmB"/>
    <property type="match status" value="1"/>
</dbReference>
<dbReference type="PANTHER" id="PTHR23417">
    <property type="entry name" value="3-DEOXY-D-MANNO-OCTULOSONIC-ACID TRANSFERASE/TRNA GUANINE-N 7 - -METHYLTRANSFERASE"/>
    <property type="match status" value="1"/>
</dbReference>
<dbReference type="PANTHER" id="PTHR23417:SF14">
    <property type="entry name" value="PENTACOTRIPEPTIDE-REPEAT REGION OF PRORP DOMAIN-CONTAINING PROTEIN"/>
    <property type="match status" value="1"/>
</dbReference>
<dbReference type="Pfam" id="PF02390">
    <property type="entry name" value="Methyltransf_4"/>
    <property type="match status" value="1"/>
</dbReference>
<dbReference type="SUPFAM" id="SSF53335">
    <property type="entry name" value="S-adenosyl-L-methionine-dependent methyltransferases"/>
    <property type="match status" value="1"/>
</dbReference>
<dbReference type="PROSITE" id="PS51625">
    <property type="entry name" value="SAM_MT_TRMB"/>
    <property type="match status" value="1"/>
</dbReference>
<proteinExistence type="inferred from homology"/>
<accession>Q4K4C6</accession>
<organism>
    <name type="scientific">Pseudomonas fluorescens (strain ATCC BAA-477 / NRRL B-23932 / Pf-5)</name>
    <dbReference type="NCBI Taxonomy" id="220664"/>
    <lineage>
        <taxon>Bacteria</taxon>
        <taxon>Pseudomonadati</taxon>
        <taxon>Pseudomonadota</taxon>
        <taxon>Gammaproteobacteria</taxon>
        <taxon>Pseudomonadales</taxon>
        <taxon>Pseudomonadaceae</taxon>
        <taxon>Pseudomonas</taxon>
    </lineage>
</organism>